<proteinExistence type="inferred from homology"/>
<reference key="1">
    <citation type="submission" date="2007-08" db="EMBL/GenBank/DDBJ databases">
        <title>Complete sequence of Roseiflexus castenholzii DSM 13941.</title>
        <authorList>
            <consortium name="US DOE Joint Genome Institute"/>
            <person name="Copeland A."/>
            <person name="Lucas S."/>
            <person name="Lapidus A."/>
            <person name="Barry K."/>
            <person name="Glavina del Rio T."/>
            <person name="Dalin E."/>
            <person name="Tice H."/>
            <person name="Pitluck S."/>
            <person name="Thompson L.S."/>
            <person name="Brettin T."/>
            <person name="Bruce D."/>
            <person name="Detter J.C."/>
            <person name="Han C."/>
            <person name="Tapia R."/>
            <person name="Schmutz J."/>
            <person name="Larimer F."/>
            <person name="Land M."/>
            <person name="Hauser L."/>
            <person name="Kyrpides N."/>
            <person name="Mikhailova N."/>
            <person name="Bryant D.A."/>
            <person name="Hanada S."/>
            <person name="Tsukatani Y."/>
            <person name="Richardson P."/>
        </authorList>
    </citation>
    <scope>NUCLEOTIDE SEQUENCE [LARGE SCALE GENOMIC DNA]</scope>
    <source>
        <strain>DSM 13941 / HLO8</strain>
    </source>
</reference>
<dbReference type="EMBL" id="CP000804">
    <property type="protein sequence ID" value="ABU56176.1"/>
    <property type="molecule type" value="Genomic_DNA"/>
</dbReference>
<dbReference type="RefSeq" id="WP_011997581.1">
    <property type="nucleotide sequence ID" value="NC_009767.1"/>
</dbReference>
<dbReference type="SMR" id="A7NFF4"/>
<dbReference type="STRING" id="383372.Rcas_0037"/>
<dbReference type="KEGG" id="rca:Rcas_0037"/>
<dbReference type="eggNOG" id="COG2003">
    <property type="taxonomic scope" value="Bacteria"/>
</dbReference>
<dbReference type="HOGENOM" id="CLU_073529_0_2_0"/>
<dbReference type="OrthoDB" id="9804482at2"/>
<dbReference type="Proteomes" id="UP000000263">
    <property type="component" value="Chromosome"/>
</dbReference>
<dbReference type="GO" id="GO:0046872">
    <property type="term" value="F:metal ion binding"/>
    <property type="evidence" value="ECO:0007669"/>
    <property type="project" value="UniProtKB-KW"/>
</dbReference>
<dbReference type="GO" id="GO:0008237">
    <property type="term" value="F:metallopeptidase activity"/>
    <property type="evidence" value="ECO:0007669"/>
    <property type="project" value="UniProtKB-KW"/>
</dbReference>
<dbReference type="GO" id="GO:0006508">
    <property type="term" value="P:proteolysis"/>
    <property type="evidence" value="ECO:0007669"/>
    <property type="project" value="UniProtKB-KW"/>
</dbReference>
<dbReference type="CDD" id="cd08071">
    <property type="entry name" value="MPN_DUF2466"/>
    <property type="match status" value="1"/>
</dbReference>
<dbReference type="Gene3D" id="3.40.140.10">
    <property type="entry name" value="Cytidine Deaminase, domain 2"/>
    <property type="match status" value="1"/>
</dbReference>
<dbReference type="InterPro" id="IPR037518">
    <property type="entry name" value="MPN"/>
</dbReference>
<dbReference type="InterPro" id="IPR025657">
    <property type="entry name" value="RadC_JAB"/>
</dbReference>
<dbReference type="InterPro" id="IPR010994">
    <property type="entry name" value="RuvA_2-like"/>
</dbReference>
<dbReference type="InterPro" id="IPR001405">
    <property type="entry name" value="UPF0758"/>
</dbReference>
<dbReference type="InterPro" id="IPR020891">
    <property type="entry name" value="UPF0758_CS"/>
</dbReference>
<dbReference type="InterPro" id="IPR046778">
    <property type="entry name" value="UPF0758_N"/>
</dbReference>
<dbReference type="NCBIfam" id="NF000642">
    <property type="entry name" value="PRK00024.1"/>
    <property type="match status" value="1"/>
</dbReference>
<dbReference type="NCBIfam" id="TIGR00608">
    <property type="entry name" value="radc"/>
    <property type="match status" value="1"/>
</dbReference>
<dbReference type="PANTHER" id="PTHR30471">
    <property type="entry name" value="DNA REPAIR PROTEIN RADC"/>
    <property type="match status" value="1"/>
</dbReference>
<dbReference type="PANTHER" id="PTHR30471:SF3">
    <property type="entry name" value="UPF0758 PROTEIN YEES-RELATED"/>
    <property type="match status" value="1"/>
</dbReference>
<dbReference type="Pfam" id="PF04002">
    <property type="entry name" value="RadC"/>
    <property type="match status" value="1"/>
</dbReference>
<dbReference type="Pfam" id="PF20582">
    <property type="entry name" value="UPF0758_N"/>
    <property type="match status" value="1"/>
</dbReference>
<dbReference type="SUPFAM" id="SSF47781">
    <property type="entry name" value="RuvA domain 2-like"/>
    <property type="match status" value="1"/>
</dbReference>
<dbReference type="PROSITE" id="PS50249">
    <property type="entry name" value="MPN"/>
    <property type="match status" value="1"/>
</dbReference>
<dbReference type="PROSITE" id="PS01302">
    <property type="entry name" value="UPF0758"/>
    <property type="match status" value="1"/>
</dbReference>
<comment type="similarity">
    <text evidence="2">Belongs to the UPF0758 family.</text>
</comment>
<keyword id="KW-0378">Hydrolase</keyword>
<keyword id="KW-0479">Metal-binding</keyword>
<keyword id="KW-0482">Metalloprotease</keyword>
<keyword id="KW-0645">Protease</keyword>
<keyword id="KW-1185">Reference proteome</keyword>
<keyword id="KW-0862">Zinc</keyword>
<name>Y037_ROSCS</name>
<evidence type="ECO:0000255" key="1">
    <source>
        <dbReference type="PROSITE-ProRule" id="PRU01182"/>
    </source>
</evidence>
<evidence type="ECO:0000305" key="2"/>
<accession>A7NFF4</accession>
<sequence length="233" mass="25749">MTDYHIRIRELPATDKPRERLRASGAAALADAELLAILLRVGVEGVNAIQLAQQLLVEFGGWSGLQRAGFEELAQRRGMGEAKTAQLKAALEIGRRLLLASGEERFQIRSPTDAAQLMQIEMSHLDQEQLRAICLDTKNRVQKIQTVYVGSLNASMVRIGEVFKEAIRLNSASIIVVHNHPSGDPTPSPEDIVVTRQMIEAGRLLDIDVLDHLVIGNGRFVSMRERGLAFIKP</sequence>
<feature type="chain" id="PRO_1000074149" description="UPF0758 protein Rcas_0037">
    <location>
        <begin position="1"/>
        <end position="233"/>
    </location>
</feature>
<feature type="domain" description="MPN" evidence="1">
    <location>
        <begin position="107"/>
        <end position="229"/>
    </location>
</feature>
<feature type="short sequence motif" description="JAMM motif" evidence="1">
    <location>
        <begin position="178"/>
        <end position="191"/>
    </location>
</feature>
<feature type="binding site" evidence="1">
    <location>
        <position position="178"/>
    </location>
    <ligand>
        <name>Zn(2+)</name>
        <dbReference type="ChEBI" id="CHEBI:29105"/>
        <note>catalytic</note>
    </ligand>
</feature>
<feature type="binding site" evidence="1">
    <location>
        <position position="180"/>
    </location>
    <ligand>
        <name>Zn(2+)</name>
        <dbReference type="ChEBI" id="CHEBI:29105"/>
        <note>catalytic</note>
    </ligand>
</feature>
<feature type="binding site" evidence="1">
    <location>
        <position position="191"/>
    </location>
    <ligand>
        <name>Zn(2+)</name>
        <dbReference type="ChEBI" id="CHEBI:29105"/>
        <note>catalytic</note>
    </ligand>
</feature>
<gene>
    <name type="ordered locus">Rcas_0037</name>
</gene>
<organism>
    <name type="scientific">Roseiflexus castenholzii (strain DSM 13941 / HLO8)</name>
    <dbReference type="NCBI Taxonomy" id="383372"/>
    <lineage>
        <taxon>Bacteria</taxon>
        <taxon>Bacillati</taxon>
        <taxon>Chloroflexota</taxon>
        <taxon>Chloroflexia</taxon>
        <taxon>Chloroflexales</taxon>
        <taxon>Roseiflexineae</taxon>
        <taxon>Roseiflexaceae</taxon>
        <taxon>Roseiflexus</taxon>
    </lineage>
</organism>
<protein>
    <recommendedName>
        <fullName>UPF0758 protein Rcas_0037</fullName>
    </recommendedName>
</protein>